<name>CINA_BACCZ</name>
<reference key="1">
    <citation type="journal article" date="2006" name="J. Bacteriol.">
        <title>Pathogenomic sequence analysis of Bacillus cereus and Bacillus thuringiensis isolates closely related to Bacillus anthracis.</title>
        <authorList>
            <person name="Han C.S."/>
            <person name="Xie G."/>
            <person name="Challacombe J.F."/>
            <person name="Altherr M.R."/>
            <person name="Bhotika S.S."/>
            <person name="Bruce D."/>
            <person name="Campbell C.S."/>
            <person name="Campbell M.L."/>
            <person name="Chen J."/>
            <person name="Chertkov O."/>
            <person name="Cleland C."/>
            <person name="Dimitrijevic M."/>
            <person name="Doggett N.A."/>
            <person name="Fawcett J.J."/>
            <person name="Glavina T."/>
            <person name="Goodwin L.A."/>
            <person name="Hill K.K."/>
            <person name="Hitchcock P."/>
            <person name="Jackson P.J."/>
            <person name="Keim P."/>
            <person name="Kewalramani A.R."/>
            <person name="Longmire J."/>
            <person name="Lucas S."/>
            <person name="Malfatti S."/>
            <person name="McMurry K."/>
            <person name="Meincke L.J."/>
            <person name="Misra M."/>
            <person name="Moseman B.L."/>
            <person name="Mundt M."/>
            <person name="Munk A.C."/>
            <person name="Okinaka R.T."/>
            <person name="Parson-Quintana B."/>
            <person name="Reilly L.P."/>
            <person name="Richardson P."/>
            <person name="Robinson D.L."/>
            <person name="Rubin E."/>
            <person name="Saunders E."/>
            <person name="Tapia R."/>
            <person name="Tesmer J.G."/>
            <person name="Thayer N."/>
            <person name="Thompson L.S."/>
            <person name="Tice H."/>
            <person name="Ticknor L.O."/>
            <person name="Wills P.L."/>
            <person name="Brettin T.S."/>
            <person name="Gilna P."/>
        </authorList>
    </citation>
    <scope>NUCLEOTIDE SEQUENCE [LARGE SCALE GENOMIC DNA]</scope>
    <source>
        <strain>ZK / E33L</strain>
    </source>
</reference>
<organism>
    <name type="scientific">Bacillus cereus (strain ZK / E33L)</name>
    <dbReference type="NCBI Taxonomy" id="288681"/>
    <lineage>
        <taxon>Bacteria</taxon>
        <taxon>Bacillati</taxon>
        <taxon>Bacillota</taxon>
        <taxon>Bacilli</taxon>
        <taxon>Bacillales</taxon>
        <taxon>Bacillaceae</taxon>
        <taxon>Bacillus</taxon>
        <taxon>Bacillus cereus group</taxon>
    </lineage>
</organism>
<feature type="chain" id="PRO_0000156749" description="Putative competence-damage inducible protein">
    <location>
        <begin position="1"/>
        <end position="412"/>
    </location>
</feature>
<accession>Q636P5</accession>
<protein>
    <recommendedName>
        <fullName evidence="1">Putative competence-damage inducible protein</fullName>
    </recommendedName>
</protein>
<gene>
    <name evidence="1" type="primary">cinA</name>
    <name type="ordered locus">BCE33L3540</name>
</gene>
<comment type="similarity">
    <text evidence="1">Belongs to the CinA family.</text>
</comment>
<sequence length="412" mass="45369">MNAEIIAVGTELLLGQIANTNAQFLSEKLASIGINVYYHTVVGDNNKRLQQAIEVAEERADMLIFTGGLGPTKDDLTKETIASSLAEELVYDEKALASIGDYFKRTGREFTENNKKQALVLDGATVFANDHGMAPGMGLNKNGKVYILLPGPPKEMKPMYVSYVEPFLRNFTTGENIYSRVLRFFGIGESQLEVKVQDLIDGQTNPTIAPLANDGEVTLRLTAKHQNVDEAEKLIQHVEDLILERVGEFFYGYDQEFLHYKAIELLKKKGLTLACAESLTGGLFGNQVTESAGVSSVFKGGVICYHNDVKQHVLHVPEEVLSTDGAVSKECARYLAENVKELLKADIGISFTGVAGPDASEHKEPGTVFVGLAIKDEPTVVFPLNLSGSRQQIRERSAKYGFYHLYKKLEEI</sequence>
<proteinExistence type="inferred from homology"/>
<dbReference type="EMBL" id="CP000001">
    <property type="protein sequence ID" value="AAU16727.1"/>
    <property type="molecule type" value="Genomic_DNA"/>
</dbReference>
<dbReference type="RefSeq" id="WP_000990709.1">
    <property type="nucleotide sequence ID" value="NC_006274.1"/>
</dbReference>
<dbReference type="SMR" id="Q636P5"/>
<dbReference type="KEGG" id="bcz:BCE33L3540"/>
<dbReference type="PATRIC" id="fig|288681.22.peg.1870"/>
<dbReference type="Proteomes" id="UP000002612">
    <property type="component" value="Chromosome"/>
</dbReference>
<dbReference type="CDD" id="cd00885">
    <property type="entry name" value="cinA"/>
    <property type="match status" value="1"/>
</dbReference>
<dbReference type="Gene3D" id="3.30.70.2860">
    <property type="match status" value="1"/>
</dbReference>
<dbReference type="Gene3D" id="3.90.950.20">
    <property type="entry name" value="CinA-like"/>
    <property type="match status" value="1"/>
</dbReference>
<dbReference type="Gene3D" id="3.40.980.10">
    <property type="entry name" value="MoaB/Mog-like domain"/>
    <property type="match status" value="1"/>
</dbReference>
<dbReference type="HAMAP" id="MF_00226_B">
    <property type="entry name" value="CinA_B"/>
    <property type="match status" value="1"/>
</dbReference>
<dbReference type="InterPro" id="IPR050101">
    <property type="entry name" value="CinA"/>
</dbReference>
<dbReference type="InterPro" id="IPR036653">
    <property type="entry name" value="CinA-like_C"/>
</dbReference>
<dbReference type="InterPro" id="IPR008136">
    <property type="entry name" value="CinA_C"/>
</dbReference>
<dbReference type="InterPro" id="IPR041424">
    <property type="entry name" value="CinA_KH"/>
</dbReference>
<dbReference type="InterPro" id="IPR008135">
    <property type="entry name" value="Competence-induced_CinA"/>
</dbReference>
<dbReference type="InterPro" id="IPR036425">
    <property type="entry name" value="MoaB/Mog-like_dom_sf"/>
</dbReference>
<dbReference type="InterPro" id="IPR001453">
    <property type="entry name" value="MoaB/Mog_dom"/>
</dbReference>
<dbReference type="NCBIfam" id="TIGR00200">
    <property type="entry name" value="cinA_nterm"/>
    <property type="match status" value="1"/>
</dbReference>
<dbReference type="NCBIfam" id="TIGR00177">
    <property type="entry name" value="molyb_syn"/>
    <property type="match status" value="1"/>
</dbReference>
<dbReference type="NCBIfam" id="TIGR00199">
    <property type="entry name" value="PncC_domain"/>
    <property type="match status" value="1"/>
</dbReference>
<dbReference type="NCBIfam" id="NF001813">
    <property type="entry name" value="PRK00549.1"/>
    <property type="match status" value="1"/>
</dbReference>
<dbReference type="PANTHER" id="PTHR13939">
    <property type="entry name" value="NICOTINAMIDE-NUCLEOTIDE AMIDOHYDROLASE PNCC"/>
    <property type="match status" value="1"/>
</dbReference>
<dbReference type="PANTHER" id="PTHR13939:SF0">
    <property type="entry name" value="NMN AMIDOHYDROLASE-LIKE PROTEIN YFAY"/>
    <property type="match status" value="1"/>
</dbReference>
<dbReference type="Pfam" id="PF02464">
    <property type="entry name" value="CinA"/>
    <property type="match status" value="1"/>
</dbReference>
<dbReference type="Pfam" id="PF18146">
    <property type="entry name" value="CinA_KH"/>
    <property type="match status" value="1"/>
</dbReference>
<dbReference type="Pfam" id="PF00994">
    <property type="entry name" value="MoCF_biosynth"/>
    <property type="match status" value="1"/>
</dbReference>
<dbReference type="PIRSF" id="PIRSF006728">
    <property type="entry name" value="CinA"/>
    <property type="match status" value="1"/>
</dbReference>
<dbReference type="SMART" id="SM00852">
    <property type="entry name" value="MoCF_biosynth"/>
    <property type="match status" value="1"/>
</dbReference>
<dbReference type="SUPFAM" id="SSF142433">
    <property type="entry name" value="CinA-like"/>
    <property type="match status" value="1"/>
</dbReference>
<dbReference type="SUPFAM" id="SSF53218">
    <property type="entry name" value="Molybdenum cofactor biosynthesis proteins"/>
    <property type="match status" value="1"/>
</dbReference>
<evidence type="ECO:0000255" key="1">
    <source>
        <dbReference type="HAMAP-Rule" id="MF_00226"/>
    </source>
</evidence>